<reference key="1">
    <citation type="journal article" date="2011" name="Proc. Natl. Acad. Sci. U.S.A.">
        <title>Genomic anatomy of Escherichia coli O157:H7 outbreaks.</title>
        <authorList>
            <person name="Eppinger M."/>
            <person name="Mammel M.K."/>
            <person name="Leclerc J.E."/>
            <person name="Ravel J."/>
            <person name="Cebula T.A."/>
        </authorList>
    </citation>
    <scope>NUCLEOTIDE SEQUENCE [LARGE SCALE GENOMIC DNA]</scope>
    <source>
        <strain>EC4115 / EHEC</strain>
    </source>
</reference>
<evidence type="ECO:0000255" key="1">
    <source>
        <dbReference type="HAMAP-Rule" id="MF_01662"/>
    </source>
</evidence>
<comment type="function">
    <text evidence="1">Involved in the anomeric conversion of L-fucose.</text>
</comment>
<comment type="catalytic activity">
    <reaction evidence="1">
        <text>alpha-L-fucose = beta-L-fucose</text>
        <dbReference type="Rhea" id="RHEA:25580"/>
        <dbReference type="ChEBI" id="CHEBI:42548"/>
        <dbReference type="ChEBI" id="CHEBI:42589"/>
        <dbReference type="EC" id="5.1.3.29"/>
    </reaction>
</comment>
<comment type="pathway">
    <text evidence="1">Carbohydrate metabolism; L-fucose metabolism.</text>
</comment>
<comment type="subunit">
    <text evidence="1">Homodecamer.</text>
</comment>
<comment type="subcellular location">
    <subcellularLocation>
        <location evidence="1">Cytoplasm</location>
    </subcellularLocation>
</comment>
<comment type="similarity">
    <text evidence="1">Belongs to the RbsD / FucU family. FucU mutarotase subfamily.</text>
</comment>
<feature type="chain" id="PRO_1000187178" description="L-fucose mutarotase">
    <location>
        <begin position="1"/>
        <end position="140"/>
    </location>
</feature>
<feature type="active site" description="Proton donor" evidence="1">
    <location>
        <position position="22"/>
    </location>
</feature>
<feature type="binding site" evidence="1">
    <location>
        <position position="30"/>
    </location>
    <ligand>
        <name>substrate</name>
    </ligand>
</feature>
<feature type="binding site" evidence="1">
    <location>
        <position position="107"/>
    </location>
    <ligand>
        <name>substrate</name>
    </ligand>
</feature>
<feature type="binding site" evidence="1">
    <location>
        <begin position="129"/>
        <end position="131"/>
    </location>
    <ligand>
        <name>substrate</name>
    </ligand>
</feature>
<proteinExistence type="inferred from homology"/>
<organism>
    <name type="scientific">Escherichia coli O157:H7 (strain EC4115 / EHEC)</name>
    <dbReference type="NCBI Taxonomy" id="444450"/>
    <lineage>
        <taxon>Bacteria</taxon>
        <taxon>Pseudomonadati</taxon>
        <taxon>Pseudomonadota</taxon>
        <taxon>Gammaproteobacteria</taxon>
        <taxon>Enterobacterales</taxon>
        <taxon>Enterobacteriaceae</taxon>
        <taxon>Escherichia</taxon>
    </lineage>
</organism>
<gene>
    <name evidence="1" type="primary">fucU</name>
    <name type="ordered locus">ECH74115_4068</name>
</gene>
<keyword id="KW-0119">Carbohydrate metabolism</keyword>
<keyword id="KW-0963">Cytoplasm</keyword>
<keyword id="KW-0294">Fucose metabolism</keyword>
<keyword id="KW-0413">Isomerase</keyword>
<dbReference type="EC" id="5.1.3.29" evidence="1"/>
<dbReference type="EMBL" id="CP001164">
    <property type="protein sequence ID" value="ACI35397.1"/>
    <property type="molecule type" value="Genomic_DNA"/>
</dbReference>
<dbReference type="RefSeq" id="WP_000920840.1">
    <property type="nucleotide sequence ID" value="NC_011353.1"/>
</dbReference>
<dbReference type="SMR" id="B5Z4C4"/>
<dbReference type="GeneID" id="93779194"/>
<dbReference type="KEGG" id="ecf:ECH74115_4068"/>
<dbReference type="HOGENOM" id="CLU_120075_1_0_6"/>
<dbReference type="UniPathway" id="UPA00956"/>
<dbReference type="GO" id="GO:0005737">
    <property type="term" value="C:cytoplasm"/>
    <property type="evidence" value="ECO:0007669"/>
    <property type="project" value="UniProtKB-SubCell"/>
</dbReference>
<dbReference type="GO" id="GO:0042806">
    <property type="term" value="F:fucose binding"/>
    <property type="evidence" value="ECO:0007669"/>
    <property type="project" value="InterPro"/>
</dbReference>
<dbReference type="GO" id="GO:0036373">
    <property type="term" value="F:L-fucose mutarotase activity"/>
    <property type="evidence" value="ECO:0007669"/>
    <property type="project" value="UniProtKB-EC"/>
</dbReference>
<dbReference type="GO" id="GO:0036065">
    <property type="term" value="P:fucosylation"/>
    <property type="evidence" value="ECO:0007669"/>
    <property type="project" value="TreeGrafter"/>
</dbReference>
<dbReference type="GO" id="GO:0042354">
    <property type="term" value="P:L-fucose metabolic process"/>
    <property type="evidence" value="ECO:0007669"/>
    <property type="project" value="UniProtKB-UniRule"/>
</dbReference>
<dbReference type="FunFam" id="3.40.1650.10:FF:000001">
    <property type="entry name" value="L-fucose mutarotase"/>
    <property type="match status" value="1"/>
</dbReference>
<dbReference type="Gene3D" id="3.40.1650.10">
    <property type="entry name" value="RbsD-like domain"/>
    <property type="match status" value="1"/>
</dbReference>
<dbReference type="HAMAP" id="MF_01662">
    <property type="entry name" value="L_fucose_rotase"/>
    <property type="match status" value="1"/>
</dbReference>
<dbReference type="InterPro" id="IPR023751">
    <property type="entry name" value="L-fucose_mutarotase"/>
</dbReference>
<dbReference type="InterPro" id="IPR023750">
    <property type="entry name" value="RbsD-like_sf"/>
</dbReference>
<dbReference type="InterPro" id="IPR050443">
    <property type="entry name" value="RbsD/FucU_mutarotase"/>
</dbReference>
<dbReference type="InterPro" id="IPR007721">
    <property type="entry name" value="RbsD_FucU"/>
</dbReference>
<dbReference type="NCBIfam" id="NF011949">
    <property type="entry name" value="PRK15420.1"/>
    <property type="match status" value="1"/>
</dbReference>
<dbReference type="PANTHER" id="PTHR31690">
    <property type="entry name" value="FUCOSE MUTAROTASE"/>
    <property type="match status" value="1"/>
</dbReference>
<dbReference type="PANTHER" id="PTHR31690:SF4">
    <property type="entry name" value="FUCOSE MUTAROTASE"/>
    <property type="match status" value="1"/>
</dbReference>
<dbReference type="Pfam" id="PF05025">
    <property type="entry name" value="RbsD_FucU"/>
    <property type="match status" value="1"/>
</dbReference>
<dbReference type="SUPFAM" id="SSF102546">
    <property type="entry name" value="RbsD-like"/>
    <property type="match status" value="1"/>
</dbReference>
<sequence length="140" mass="15473">MLKTISPLISPELLKVLAEMGHGDEIIFSDAHFPAHSMGPQVIRADGLLVSDLLQAIIPLFELDSYAPPLVMMAAVEGDTLDPEVERRYRNALSLQAPCPDIIRINRFAFYERAQKAFAIVITGERAKYGNILLKKGVTP</sequence>
<accession>B5Z4C4</accession>
<protein>
    <recommendedName>
        <fullName evidence="1">L-fucose mutarotase</fullName>
        <ecNumber evidence="1">5.1.3.29</ecNumber>
    </recommendedName>
    <alternativeName>
        <fullName evidence="1">Fucose 1-epimerase</fullName>
    </alternativeName>
    <alternativeName>
        <fullName evidence="1">Type-2 mutarotase</fullName>
    </alternativeName>
</protein>
<name>FUCM_ECO5E</name>